<name>RL25_AMOA5</name>
<keyword id="KW-1185">Reference proteome</keyword>
<keyword id="KW-0687">Ribonucleoprotein</keyword>
<keyword id="KW-0689">Ribosomal protein</keyword>
<keyword id="KW-0694">RNA-binding</keyword>
<keyword id="KW-0699">rRNA-binding</keyword>
<organism>
    <name type="scientific">Amoebophilus asiaticus (strain 5a2)</name>
    <dbReference type="NCBI Taxonomy" id="452471"/>
    <lineage>
        <taxon>Bacteria</taxon>
        <taxon>Pseudomonadati</taxon>
        <taxon>Bacteroidota</taxon>
        <taxon>Cytophagia</taxon>
        <taxon>Cytophagales</taxon>
        <taxon>Amoebophilaceae</taxon>
        <taxon>Candidatus Amoebophilus</taxon>
    </lineage>
</organism>
<gene>
    <name evidence="1" type="primary">rplY</name>
    <name evidence="1" type="synonym">ctc</name>
    <name type="ordered locus">Aasi_0482</name>
</gene>
<evidence type="ECO:0000255" key="1">
    <source>
        <dbReference type="HAMAP-Rule" id="MF_01334"/>
    </source>
</evidence>
<evidence type="ECO:0000305" key="2"/>
<reference key="1">
    <citation type="journal article" date="2010" name="J. Bacteriol.">
        <title>The genome of the amoeba symbiont 'Candidatus Amoebophilus asiaticus' reveals common mechanisms for host cell interaction among amoeba-associated bacteria.</title>
        <authorList>
            <person name="Schmitz-Esser S."/>
            <person name="Tischler P."/>
            <person name="Arnold R."/>
            <person name="Montanaro J."/>
            <person name="Wagner M."/>
            <person name="Rattei T."/>
            <person name="Horn M."/>
        </authorList>
    </citation>
    <scope>NUCLEOTIDE SEQUENCE [LARGE SCALE GENOMIC DNA]</scope>
    <source>
        <strain>5a2</strain>
    </source>
</reference>
<dbReference type="EMBL" id="CP001102">
    <property type="protein sequence ID" value="ACE05891.1"/>
    <property type="molecule type" value="Genomic_DNA"/>
</dbReference>
<dbReference type="RefSeq" id="WP_012472655.1">
    <property type="nucleotide sequence ID" value="NC_010830.1"/>
</dbReference>
<dbReference type="SMR" id="B3ERN9"/>
<dbReference type="STRING" id="452471.Aasi_0482"/>
<dbReference type="KEGG" id="aas:Aasi_0482"/>
<dbReference type="eggNOG" id="COG1825">
    <property type="taxonomic scope" value="Bacteria"/>
</dbReference>
<dbReference type="HOGENOM" id="CLU_075939_2_1_10"/>
<dbReference type="OrthoDB" id="9786489at2"/>
<dbReference type="Proteomes" id="UP000001227">
    <property type="component" value="Chromosome"/>
</dbReference>
<dbReference type="GO" id="GO:0022625">
    <property type="term" value="C:cytosolic large ribosomal subunit"/>
    <property type="evidence" value="ECO:0007669"/>
    <property type="project" value="TreeGrafter"/>
</dbReference>
<dbReference type="GO" id="GO:0008097">
    <property type="term" value="F:5S rRNA binding"/>
    <property type="evidence" value="ECO:0007669"/>
    <property type="project" value="InterPro"/>
</dbReference>
<dbReference type="GO" id="GO:0003735">
    <property type="term" value="F:structural constituent of ribosome"/>
    <property type="evidence" value="ECO:0007669"/>
    <property type="project" value="InterPro"/>
</dbReference>
<dbReference type="GO" id="GO:0006412">
    <property type="term" value="P:translation"/>
    <property type="evidence" value="ECO:0007669"/>
    <property type="project" value="UniProtKB-UniRule"/>
</dbReference>
<dbReference type="CDD" id="cd00495">
    <property type="entry name" value="Ribosomal_L25_TL5_CTC"/>
    <property type="match status" value="1"/>
</dbReference>
<dbReference type="Gene3D" id="2.170.120.20">
    <property type="entry name" value="Ribosomal protein L25, beta domain"/>
    <property type="match status" value="1"/>
</dbReference>
<dbReference type="Gene3D" id="2.40.240.10">
    <property type="entry name" value="Ribosomal Protein L25, Chain P"/>
    <property type="match status" value="1"/>
</dbReference>
<dbReference type="HAMAP" id="MF_01334">
    <property type="entry name" value="Ribosomal_bL25_CTC"/>
    <property type="match status" value="1"/>
</dbReference>
<dbReference type="InterPro" id="IPR020056">
    <property type="entry name" value="Rbsml_bL25/Gln-tRNA_synth_N"/>
</dbReference>
<dbReference type="InterPro" id="IPR011035">
    <property type="entry name" value="Ribosomal_bL25/Gln-tRNA_synth"/>
</dbReference>
<dbReference type="InterPro" id="IPR020057">
    <property type="entry name" value="Ribosomal_bL25_b-dom"/>
</dbReference>
<dbReference type="InterPro" id="IPR037121">
    <property type="entry name" value="Ribosomal_bL25_C"/>
</dbReference>
<dbReference type="InterPro" id="IPR001021">
    <property type="entry name" value="Ribosomal_bL25_long"/>
</dbReference>
<dbReference type="InterPro" id="IPR029751">
    <property type="entry name" value="Ribosomal_L25_dom"/>
</dbReference>
<dbReference type="InterPro" id="IPR020930">
    <property type="entry name" value="Ribosomal_uL5_bac-type"/>
</dbReference>
<dbReference type="NCBIfam" id="TIGR00731">
    <property type="entry name" value="bL25_bact_ctc"/>
    <property type="match status" value="1"/>
</dbReference>
<dbReference type="NCBIfam" id="NF004132">
    <property type="entry name" value="PRK05618.2-2"/>
    <property type="match status" value="1"/>
</dbReference>
<dbReference type="PANTHER" id="PTHR33284">
    <property type="entry name" value="RIBOSOMAL PROTEIN L25/GLN-TRNA SYNTHETASE, ANTI-CODON-BINDING DOMAIN-CONTAINING PROTEIN"/>
    <property type="match status" value="1"/>
</dbReference>
<dbReference type="PANTHER" id="PTHR33284:SF1">
    <property type="entry name" value="RIBOSOMAL PROTEIN L25_GLN-TRNA SYNTHETASE, ANTI-CODON-BINDING DOMAIN-CONTAINING PROTEIN"/>
    <property type="match status" value="1"/>
</dbReference>
<dbReference type="Pfam" id="PF01386">
    <property type="entry name" value="Ribosomal_L25p"/>
    <property type="match status" value="1"/>
</dbReference>
<dbReference type="Pfam" id="PF14693">
    <property type="entry name" value="Ribosomal_TL5_C"/>
    <property type="match status" value="1"/>
</dbReference>
<dbReference type="SUPFAM" id="SSF50715">
    <property type="entry name" value="Ribosomal protein L25-like"/>
    <property type="match status" value="1"/>
</dbReference>
<accession>B3ERN9</accession>
<feature type="chain" id="PRO_1000142483" description="Large ribosomal subunit protein bL25">
    <location>
        <begin position="1"/>
        <end position="196"/>
    </location>
</feature>
<comment type="function">
    <text evidence="1">This is one of the proteins that binds to the 5S RNA in the ribosome where it forms part of the central protuberance.</text>
</comment>
<comment type="subunit">
    <text evidence="1">Part of the 50S ribosomal subunit; part of the 5S rRNA/L5/L18/L25 subcomplex. Contacts the 5S rRNA. Binds to the 5S rRNA independently of L5 and L18.</text>
</comment>
<comment type="similarity">
    <text evidence="1">Belongs to the bacterial ribosomal protein bL25 family. CTC subfamily.</text>
</comment>
<sequence>MKTIEIIGYRRANLGKQASKQLRNDAQVPGVLYGGKEQVHFYTPMAILKDLVYTPQAYFVTLNLEGAIYNCILQDIQFHPVNEVILHIDLLQIFEDKQIKMDIPIVLVGDAPGVVKGGNLVHKKKKLSVVAYPKDMPDTIPVDISGLDVGQMTRVSHIKAENYTILAVPGTPVAVVETTRALRAGAAEAEGKGKKK</sequence>
<proteinExistence type="inferred from homology"/>
<protein>
    <recommendedName>
        <fullName evidence="1">Large ribosomal subunit protein bL25</fullName>
    </recommendedName>
    <alternativeName>
        <fullName evidence="2">50S ribosomal protein L25</fullName>
    </alternativeName>
    <alternativeName>
        <fullName evidence="1">General stress protein CTC</fullName>
    </alternativeName>
</protein>